<proteinExistence type="evidence at protein level"/>
<feature type="chain" id="PRO_0000067991" description="Trypanothione reductase">
    <location>
        <begin position="1"/>
        <end position="492"/>
    </location>
</feature>
<feature type="active site" description="Proton acceptor" evidence="1">
    <location>
        <position position="461"/>
    </location>
</feature>
<feature type="binding site" evidence="1">
    <location>
        <begin position="35"/>
        <end position="52"/>
    </location>
    <ligand>
        <name>FAD</name>
        <dbReference type="ChEBI" id="CHEBI:57692"/>
    </ligand>
</feature>
<feature type="disulfide bond" description="Redox-active" evidence="1">
    <location>
        <begin position="52"/>
        <end position="57"/>
    </location>
</feature>
<feature type="mutagenesis site" description="KM=266 uM for trypanothione." evidence="2">
    <original>E</original>
    <variation>A</variation>
    <location>
        <position position="18"/>
    </location>
</feature>
<feature type="mutagenesis site" description="KM=600 uM for trypanothione." evidence="2">
    <original>W</original>
    <variation>R</variation>
    <location>
        <position position="21"/>
    </location>
</feature>
<feature type="mutagenesis site" description="KM=9 uM for trypanothione." evidence="2">
    <original>A</original>
    <variation>R</variation>
    <location>
        <position position="343"/>
    </location>
</feature>
<sequence length="492" mass="53443">MSKAFDLVIIGAGSGGLEAGWNAATLYKKRVAVVDVQTVHGPPFFAALGGTCVNVGCVPKKLMVTGAQYMDQLRESAGFGWEFDASTIKANWKTLIAAKNAAVLDINKSYEDMFKDTEGLEFFLGWGALEQKNVVTVREGADPKSKVKERLQAEHIIIATGSWPQMLKIPGIEHCISSNEAFYLEEPPRRVLTVGGGFISVEFAGIFNAYKPVGGKVTLCYRNNPILRGFDYTLRQELTKQLVANGIDIMTNENPSKIELNPDGSKHVTFESGKTLDVDVVMMAIGRLPRTGYLQLQTVGVNLTDKGAIQVDEFSRTNVPNIYAIGDVTGRIMLTPVAINEGASVVDTIFGSKPRKTDHTRVASAVFSIPPIGTCGLTEEEAAKSFEKVAVYLSCFTPLMHNISGSKYKKFVAKIITDHGDGTVVGVHLLGDSSPEIIQAVGICMKLNAKISDFYNTIGVHPTSAEELCSMRTPSHYYIKGEKMETLPDSSL</sequence>
<keyword id="KW-0963">Cytoplasm</keyword>
<keyword id="KW-1015">Disulfide bond</keyword>
<keyword id="KW-0274">FAD</keyword>
<keyword id="KW-0285">Flavoprotein</keyword>
<keyword id="KW-0521">NADP</keyword>
<keyword id="KW-0560">Oxidoreductase</keyword>
<keyword id="KW-0676">Redox-active center</keyword>
<comment type="function">
    <text>Trypanothione is the parasite analog of glutathione; this enzyme is the equivalent of glutathione reductase.</text>
</comment>
<comment type="catalytic activity">
    <reaction>
        <text>trypanothione + NADP(+) = trypanothione disulfide + NADPH + H(+)</text>
        <dbReference type="Rhea" id="RHEA:16757"/>
        <dbReference type="ChEBI" id="CHEBI:15378"/>
        <dbReference type="ChEBI" id="CHEBI:57783"/>
        <dbReference type="ChEBI" id="CHEBI:58290"/>
        <dbReference type="ChEBI" id="CHEBI:58349"/>
        <dbReference type="ChEBI" id="CHEBI:58661"/>
        <dbReference type="EC" id="1.8.1.12"/>
    </reaction>
</comment>
<comment type="cofactor">
    <cofactor evidence="1">
        <name>FAD</name>
        <dbReference type="ChEBI" id="CHEBI:57692"/>
    </cofactor>
    <text evidence="1">Binds 1 FAD per subunit.</text>
</comment>
<comment type="biophysicochemical properties">
    <kinetics>
        <KM>18 uM for trypanothione</KM>
    </kinetics>
</comment>
<comment type="subunit">
    <text>Homodimer.</text>
</comment>
<comment type="subcellular location">
    <subcellularLocation>
        <location>Cytoplasm</location>
    </subcellularLocation>
</comment>
<comment type="miscellaneous">
    <text>The active site is a redox-active disulfide bond.</text>
</comment>
<comment type="similarity">
    <text evidence="3">Belongs to the class-I pyridine nucleotide-disulfide oxidoreductase family.</text>
</comment>
<reference key="1">
    <citation type="journal article" date="1988" name="Biochemistry">
        <title>Trypanothione reductase of Trypanosoma congolense: gene isolation, primary sequence determination, and comparison to glutathione reductase.</title>
        <authorList>
            <person name="Shames S.L."/>
            <person name="Kimmel B.E."/>
            <person name="Peoples O.P."/>
            <person name="Agabian N."/>
            <person name="Walsh C.T."/>
        </authorList>
    </citation>
    <scope>NUCLEOTIDE SEQUENCE [GENOMIC DNA]</scope>
</reference>
<reference key="2">
    <citation type="journal article" date="1991" name="Trends Biochem. Sci.">
        <title>Molecular studies on trypanothione reductase, a target for antiparasitic drugs.</title>
        <authorList>
            <person name="Walsh C.T."/>
            <person name="Bradley M."/>
            <person name="Nadeau K."/>
        </authorList>
    </citation>
    <scope>REVIEW</scope>
    <scope>MUTAGENESIS OF GLU-18; TRP-21 AND ALA-343</scope>
</reference>
<name>TYTR_TRYCO</name>
<gene>
    <name type="primary">TPR</name>
</gene>
<dbReference type="EC" id="1.8.1.12"/>
<dbReference type="EMBL" id="M21122">
    <property type="protein sequence ID" value="AAA30258.1"/>
    <property type="molecule type" value="Genomic_DNA"/>
</dbReference>
<dbReference type="PIR" id="A27727">
    <property type="entry name" value="A27727"/>
</dbReference>
<dbReference type="SMR" id="P13110"/>
<dbReference type="BindingDB" id="P13110"/>
<dbReference type="ChEMBL" id="CHEMBL5291562"/>
<dbReference type="VEuPathDB" id="TriTrypDB:TcIL3000.A.H_000810800"/>
<dbReference type="VEuPathDB" id="TriTrypDB:TcIL3000_10_8870"/>
<dbReference type="SABIO-RK" id="P13110"/>
<dbReference type="GO" id="GO:0005829">
    <property type="term" value="C:cytosol"/>
    <property type="evidence" value="ECO:0007669"/>
    <property type="project" value="TreeGrafter"/>
</dbReference>
<dbReference type="GO" id="GO:0005739">
    <property type="term" value="C:mitochondrion"/>
    <property type="evidence" value="ECO:0007669"/>
    <property type="project" value="TreeGrafter"/>
</dbReference>
<dbReference type="GO" id="GO:0050660">
    <property type="term" value="F:flavin adenine dinucleotide binding"/>
    <property type="evidence" value="ECO:0007669"/>
    <property type="project" value="InterPro"/>
</dbReference>
<dbReference type="GO" id="GO:0004362">
    <property type="term" value="F:glutathione-disulfide reductase (NADPH) activity"/>
    <property type="evidence" value="ECO:0007669"/>
    <property type="project" value="TreeGrafter"/>
</dbReference>
<dbReference type="GO" id="GO:0015042">
    <property type="term" value="F:trypanothione-disulfide reductase (NADPH) activity"/>
    <property type="evidence" value="ECO:0007669"/>
    <property type="project" value="UniProtKB-EC"/>
</dbReference>
<dbReference type="GO" id="GO:0045454">
    <property type="term" value="P:cell redox homeostasis"/>
    <property type="evidence" value="ECO:0007669"/>
    <property type="project" value="InterPro"/>
</dbReference>
<dbReference type="GO" id="GO:0034599">
    <property type="term" value="P:cellular response to oxidative stress"/>
    <property type="evidence" value="ECO:0007669"/>
    <property type="project" value="TreeGrafter"/>
</dbReference>
<dbReference type="GO" id="GO:0006749">
    <property type="term" value="P:glutathione metabolic process"/>
    <property type="evidence" value="ECO:0007669"/>
    <property type="project" value="TreeGrafter"/>
</dbReference>
<dbReference type="FunFam" id="3.50.50.60:FF:000051">
    <property type="entry name" value="Glutathione reductase"/>
    <property type="match status" value="1"/>
</dbReference>
<dbReference type="FunFam" id="3.50.50.60:FF:000233">
    <property type="entry name" value="Trypanothione reductase"/>
    <property type="match status" value="1"/>
</dbReference>
<dbReference type="Gene3D" id="3.30.390.30">
    <property type="match status" value="1"/>
</dbReference>
<dbReference type="Gene3D" id="3.50.50.60">
    <property type="entry name" value="FAD/NAD(P)-binding domain"/>
    <property type="match status" value="2"/>
</dbReference>
<dbReference type="InterPro" id="IPR036188">
    <property type="entry name" value="FAD/NAD-bd_sf"/>
</dbReference>
<dbReference type="InterPro" id="IPR023753">
    <property type="entry name" value="FAD/NAD-binding_dom"/>
</dbReference>
<dbReference type="InterPro" id="IPR016156">
    <property type="entry name" value="FAD/NAD-linked_Rdtase_dimer_sf"/>
</dbReference>
<dbReference type="InterPro" id="IPR046952">
    <property type="entry name" value="GSHR/TRXR-like"/>
</dbReference>
<dbReference type="InterPro" id="IPR001100">
    <property type="entry name" value="Pyr_nuc-diS_OxRdtase"/>
</dbReference>
<dbReference type="InterPro" id="IPR004099">
    <property type="entry name" value="Pyr_nucl-diS_OxRdtase_dimer"/>
</dbReference>
<dbReference type="InterPro" id="IPR012999">
    <property type="entry name" value="Pyr_OxRdtase_I_AS"/>
</dbReference>
<dbReference type="InterPro" id="IPR001864">
    <property type="entry name" value="Trypnth_redctse"/>
</dbReference>
<dbReference type="NCBIfam" id="TIGR01423">
    <property type="entry name" value="trypano_reduc"/>
    <property type="match status" value="1"/>
</dbReference>
<dbReference type="PANTHER" id="PTHR42737">
    <property type="entry name" value="GLUTATHIONE REDUCTASE"/>
    <property type="match status" value="1"/>
</dbReference>
<dbReference type="PANTHER" id="PTHR42737:SF2">
    <property type="entry name" value="GLUTATHIONE REDUCTASE"/>
    <property type="match status" value="1"/>
</dbReference>
<dbReference type="Pfam" id="PF07992">
    <property type="entry name" value="Pyr_redox_2"/>
    <property type="match status" value="1"/>
</dbReference>
<dbReference type="Pfam" id="PF02852">
    <property type="entry name" value="Pyr_redox_dim"/>
    <property type="match status" value="1"/>
</dbReference>
<dbReference type="PIRSF" id="PIRSF000350">
    <property type="entry name" value="Mercury_reductase_MerA"/>
    <property type="match status" value="1"/>
</dbReference>
<dbReference type="PRINTS" id="PR00368">
    <property type="entry name" value="FADPNR"/>
</dbReference>
<dbReference type="PRINTS" id="PR00411">
    <property type="entry name" value="PNDRDTASEI"/>
</dbReference>
<dbReference type="PRINTS" id="PR00470">
    <property type="entry name" value="TRYPANRDTASE"/>
</dbReference>
<dbReference type="SUPFAM" id="SSF51905">
    <property type="entry name" value="FAD/NAD(P)-binding domain"/>
    <property type="match status" value="1"/>
</dbReference>
<dbReference type="SUPFAM" id="SSF55424">
    <property type="entry name" value="FAD/NAD-linked reductases, dimerisation (C-terminal) domain"/>
    <property type="match status" value="1"/>
</dbReference>
<dbReference type="SUPFAM" id="SSF51971">
    <property type="entry name" value="Nucleotide-binding domain"/>
    <property type="match status" value="1"/>
</dbReference>
<dbReference type="PROSITE" id="PS00076">
    <property type="entry name" value="PYRIDINE_REDOX_1"/>
    <property type="match status" value="1"/>
</dbReference>
<organism>
    <name type="scientific">Trypanosoma congolense</name>
    <dbReference type="NCBI Taxonomy" id="5692"/>
    <lineage>
        <taxon>Eukaryota</taxon>
        <taxon>Discoba</taxon>
        <taxon>Euglenozoa</taxon>
        <taxon>Kinetoplastea</taxon>
        <taxon>Metakinetoplastina</taxon>
        <taxon>Trypanosomatida</taxon>
        <taxon>Trypanosomatidae</taxon>
        <taxon>Trypanosoma</taxon>
        <taxon>Nannomonas</taxon>
    </lineage>
</organism>
<protein>
    <recommendedName>
        <fullName>Trypanothione reductase</fullName>
        <shortName>TR</shortName>
        <ecNumber>1.8.1.12</ecNumber>
    </recommendedName>
    <alternativeName>
        <fullName>N(1),N(8)-bis(glutathionyl)spermidine reductase</fullName>
    </alternativeName>
</protein>
<evidence type="ECO:0000250" key="1"/>
<evidence type="ECO:0000303" key="2">
    <source>
    </source>
</evidence>
<evidence type="ECO:0000305" key="3"/>
<accession>P13110</accession>